<keyword id="KW-0238">DNA-binding</keyword>
<keyword id="KW-0446">Lipid-binding</keyword>
<keyword id="KW-0479">Metal-binding</keyword>
<keyword id="KW-0539">Nucleus</keyword>
<keyword id="KW-0675">Receptor</keyword>
<keyword id="KW-1185">Reference proteome</keyword>
<keyword id="KW-0754">Steroid-binding</keyword>
<keyword id="KW-0804">Transcription</keyword>
<keyword id="KW-0805">Transcription regulation</keyword>
<keyword id="KW-0862">Zinc</keyword>
<keyword id="KW-0863">Zinc-finger</keyword>
<name>ESR2_SPAAU</name>
<sequence length="559" mass="62698">MAVACSPEKDQSLLQLQKVDSSRVILSPVLSSPMETNQPICIPSPYTDRGHDFPTIPFYSATNFSYANPPAISDRPSVHQTLSPSLFWPSHGHVGTTLPLHHLQARPQHGQAVQSPWVELSPLDNVLTSSKSARRRSQENEEGEVSSGGKADLHFCAVCHDYASGYHYGVWSCEGCKAFFKRSIQRHNDYICPATNQCTIDKNRRKSCQACRLHKCYNVGMTKCGMRKERGNFRDPQMRRVTRLSSQGRTSGPSVLNGPAVGPLNTPQPPALTSKQLIERIMEAEPPEIYLMKDMRRPLTEANIMMSLTNLADKELVHMITWAKKIPGFLELGLLDQVHLLECCWLEVLMIGLMWRSVDHPGKLIFSPDLSLSREEGSCVQGFLEIFDMLIAATSRVRELKLQREEYVCLKAMILLNSNMCLSSSEGSEELQSRSKLLRLLDAVTDALVWAIAKTGLTFRQQYTRLAHLLMLLSHIRHVSNKGMDHLHGMKMKNMVPLYDLLLEMLDAHIMHSSRLPRRSPQQETVEQCDAPARPHSPGTSGPTNTWTPSCTGGRGEPQ</sequence>
<dbReference type="EMBL" id="AF136980">
    <property type="protein sequence ID" value="AAD31033.1"/>
    <property type="molecule type" value="mRNA"/>
</dbReference>
<dbReference type="SMR" id="Q9W6M2"/>
<dbReference type="FunCoup" id="Q9W6M2">
    <property type="interactions" value="552"/>
</dbReference>
<dbReference type="InParanoid" id="Q9W6M2"/>
<dbReference type="Proteomes" id="UP000472265">
    <property type="component" value="Unplaced"/>
</dbReference>
<dbReference type="GO" id="GO:0005634">
    <property type="term" value="C:nucleus"/>
    <property type="evidence" value="ECO:0007669"/>
    <property type="project" value="UniProtKB-SubCell"/>
</dbReference>
<dbReference type="GO" id="GO:0042562">
    <property type="term" value="F:hormone binding"/>
    <property type="evidence" value="ECO:0007669"/>
    <property type="project" value="UniProtKB-ARBA"/>
</dbReference>
<dbReference type="GO" id="GO:0030284">
    <property type="term" value="F:nuclear estrogen receptor activity"/>
    <property type="evidence" value="ECO:0007669"/>
    <property type="project" value="InterPro"/>
</dbReference>
<dbReference type="GO" id="GO:0043565">
    <property type="term" value="F:sequence-specific DNA binding"/>
    <property type="evidence" value="ECO:0007669"/>
    <property type="project" value="InterPro"/>
</dbReference>
<dbReference type="GO" id="GO:0005496">
    <property type="term" value="F:steroid binding"/>
    <property type="evidence" value="ECO:0000250"/>
    <property type="project" value="UniProtKB"/>
</dbReference>
<dbReference type="GO" id="GO:0008270">
    <property type="term" value="F:zinc ion binding"/>
    <property type="evidence" value="ECO:0007669"/>
    <property type="project" value="UniProtKB-KW"/>
</dbReference>
<dbReference type="GO" id="GO:0071392">
    <property type="term" value="P:cellular response to estradiol stimulus"/>
    <property type="evidence" value="ECO:0007669"/>
    <property type="project" value="InterPro"/>
</dbReference>
<dbReference type="GO" id="GO:0030520">
    <property type="term" value="P:estrogen receptor signaling pathway"/>
    <property type="evidence" value="ECO:0007669"/>
    <property type="project" value="InterPro"/>
</dbReference>
<dbReference type="CDD" id="cd07171">
    <property type="entry name" value="NR_DBD_ER"/>
    <property type="match status" value="1"/>
</dbReference>
<dbReference type="CDD" id="cd06949">
    <property type="entry name" value="NR_LBD_ER"/>
    <property type="match status" value="1"/>
</dbReference>
<dbReference type="FunFam" id="1.10.565.10:FF:000010">
    <property type="entry name" value="Estrogen receptor"/>
    <property type="match status" value="1"/>
</dbReference>
<dbReference type="FunFam" id="3.30.50.10:FF:000014">
    <property type="entry name" value="Estrogen receptor beta"/>
    <property type="match status" value="1"/>
</dbReference>
<dbReference type="Gene3D" id="3.30.50.10">
    <property type="entry name" value="Erythroid Transcription Factor GATA-1, subunit A"/>
    <property type="match status" value="1"/>
</dbReference>
<dbReference type="Gene3D" id="1.10.565.10">
    <property type="entry name" value="Retinoid X Receptor"/>
    <property type="match status" value="1"/>
</dbReference>
<dbReference type="InterPro" id="IPR021064">
    <property type="entry name" value="ER-beta-like_N"/>
</dbReference>
<dbReference type="InterPro" id="IPR028355">
    <property type="entry name" value="ER-beta/gamma"/>
</dbReference>
<dbReference type="InterPro" id="IPR024178">
    <property type="entry name" value="Est_rcpt/est-rel_rcp"/>
</dbReference>
<dbReference type="InterPro" id="IPR035500">
    <property type="entry name" value="NHR-like_dom_sf"/>
</dbReference>
<dbReference type="InterPro" id="IPR000536">
    <property type="entry name" value="Nucl_hrmn_rcpt_lig-bd"/>
</dbReference>
<dbReference type="InterPro" id="IPR050200">
    <property type="entry name" value="Nuclear_hormone_rcpt_NR3"/>
</dbReference>
<dbReference type="InterPro" id="IPR001723">
    <property type="entry name" value="Nuclear_hrmn_rcpt"/>
</dbReference>
<dbReference type="InterPro" id="IPR001628">
    <property type="entry name" value="Znf_hrmn_rcpt"/>
</dbReference>
<dbReference type="InterPro" id="IPR013088">
    <property type="entry name" value="Znf_NHR/GATA"/>
</dbReference>
<dbReference type="PANTHER" id="PTHR48092">
    <property type="entry name" value="KNIRPS-RELATED PROTEIN-RELATED"/>
    <property type="match status" value="1"/>
</dbReference>
<dbReference type="Pfam" id="PF12497">
    <property type="entry name" value="ERbeta_N"/>
    <property type="match status" value="1"/>
</dbReference>
<dbReference type="Pfam" id="PF00104">
    <property type="entry name" value="Hormone_recep"/>
    <property type="match status" value="1"/>
</dbReference>
<dbReference type="Pfam" id="PF00105">
    <property type="entry name" value="zf-C4"/>
    <property type="match status" value="1"/>
</dbReference>
<dbReference type="PIRSF" id="PIRSF500102">
    <property type="entry name" value="ER-b"/>
    <property type="match status" value="1"/>
</dbReference>
<dbReference type="PIRSF" id="PIRSF002527">
    <property type="entry name" value="ER-like_NR"/>
    <property type="match status" value="1"/>
</dbReference>
<dbReference type="PRINTS" id="PR00398">
    <property type="entry name" value="STRDHORMONER"/>
</dbReference>
<dbReference type="PRINTS" id="PR00047">
    <property type="entry name" value="STROIDFINGER"/>
</dbReference>
<dbReference type="SMART" id="SM00430">
    <property type="entry name" value="HOLI"/>
    <property type="match status" value="1"/>
</dbReference>
<dbReference type="SMART" id="SM00399">
    <property type="entry name" value="ZnF_C4"/>
    <property type="match status" value="1"/>
</dbReference>
<dbReference type="SUPFAM" id="SSF57716">
    <property type="entry name" value="Glucocorticoid receptor-like (DNA-binding domain)"/>
    <property type="match status" value="1"/>
</dbReference>
<dbReference type="SUPFAM" id="SSF48508">
    <property type="entry name" value="Nuclear receptor ligand-binding domain"/>
    <property type="match status" value="1"/>
</dbReference>
<dbReference type="PROSITE" id="PS51843">
    <property type="entry name" value="NR_LBD"/>
    <property type="match status" value="1"/>
</dbReference>
<dbReference type="PROSITE" id="PS00031">
    <property type="entry name" value="NUCLEAR_REC_DBD_1"/>
    <property type="match status" value="1"/>
</dbReference>
<dbReference type="PROSITE" id="PS51030">
    <property type="entry name" value="NUCLEAR_REC_DBD_2"/>
    <property type="match status" value="1"/>
</dbReference>
<accession>Q9W6M2</accession>
<evidence type="ECO:0000250" key="1"/>
<evidence type="ECO:0000255" key="2">
    <source>
        <dbReference type="PROSITE-ProRule" id="PRU00407"/>
    </source>
</evidence>
<evidence type="ECO:0000255" key="3">
    <source>
        <dbReference type="PROSITE-ProRule" id="PRU01189"/>
    </source>
</evidence>
<evidence type="ECO:0000256" key="4">
    <source>
        <dbReference type="SAM" id="MobiDB-lite"/>
    </source>
</evidence>
<evidence type="ECO:0000305" key="5"/>
<gene>
    <name type="primary">esr2</name>
    <name type="synonym">nr3a2</name>
</gene>
<comment type="function">
    <text>Binds estrogens with an affinity similar to that of ER-alpha, and activates expression of reporter genes containing estrogen response elements (ERE) in an estrogen-dependent manner.</text>
</comment>
<comment type="subunit">
    <text evidence="1">Binds DNA as a homodimer. Can form a heterodimer with ER-alpha (By similarity).</text>
</comment>
<comment type="subcellular location">
    <subcellularLocation>
        <location>Nucleus</location>
    </subcellularLocation>
</comment>
<comment type="domain">
    <text>Composed of three domains: a modulating N-terminal domain, a DNA-binding domain and a C-terminal ligand-binding domain.</text>
</comment>
<comment type="similarity">
    <text evidence="5">Belongs to the nuclear hormone receptor family. NR3 subfamily.</text>
</comment>
<protein>
    <recommendedName>
        <fullName>Estrogen receptor beta</fullName>
        <shortName>ER-beta</shortName>
    </recommendedName>
    <alternativeName>
        <fullName>Nuclear receptor subfamily 3 group A member 2</fullName>
    </alternativeName>
</protein>
<reference key="1">
    <citation type="journal article" date="2000" name="J. Endocrinol.">
        <title>Two estrogen receptors expressed in the teleost fish, Sparus aurata: cDNA cloning, characterization and tissue distribution.</title>
        <authorList>
            <person name="Socorro S."/>
            <person name="Power D.M."/>
            <person name="Olsson P.-E."/>
            <person name="Canario A.V.M."/>
        </authorList>
    </citation>
    <scope>NUCLEOTIDE SEQUENCE [MRNA]</scope>
    <source>
        <tissue>Ovary</tissue>
    </source>
</reference>
<feature type="chain" id="PRO_0000053658" description="Estrogen receptor beta">
    <location>
        <begin position="1"/>
        <end position="559"/>
    </location>
</feature>
<feature type="domain" description="NR LBD" evidence="3">
    <location>
        <begin position="273"/>
        <end position="509"/>
    </location>
</feature>
<feature type="DNA-binding region" description="Nuclear receptor" evidence="2">
    <location>
        <begin position="156"/>
        <end position="221"/>
    </location>
</feature>
<feature type="zinc finger region" description="NR C4-type" evidence="2">
    <location>
        <begin position="156"/>
        <end position="176"/>
    </location>
</feature>
<feature type="zinc finger region" description="NR C4-type" evidence="2">
    <location>
        <begin position="192"/>
        <end position="216"/>
    </location>
</feature>
<feature type="region of interest" description="Modulating">
    <location>
        <begin position="1"/>
        <end position="155"/>
    </location>
</feature>
<feature type="region of interest" description="Disordered" evidence="4">
    <location>
        <begin position="128"/>
        <end position="148"/>
    </location>
</feature>
<feature type="region of interest" description="Disordered" evidence="4">
    <location>
        <begin position="243"/>
        <end position="269"/>
    </location>
</feature>
<feature type="region of interest" description="Disordered" evidence="4">
    <location>
        <begin position="514"/>
        <end position="559"/>
    </location>
</feature>
<feature type="compositionally biased region" description="Polar residues" evidence="4">
    <location>
        <begin position="243"/>
        <end position="254"/>
    </location>
</feature>
<feature type="compositionally biased region" description="Polar residues" evidence="4">
    <location>
        <begin position="538"/>
        <end position="551"/>
    </location>
</feature>
<proteinExistence type="evidence at transcript level"/>
<organism>
    <name type="scientific">Sparus aurata</name>
    <name type="common">Gilthead sea bream</name>
    <dbReference type="NCBI Taxonomy" id="8175"/>
    <lineage>
        <taxon>Eukaryota</taxon>
        <taxon>Metazoa</taxon>
        <taxon>Chordata</taxon>
        <taxon>Craniata</taxon>
        <taxon>Vertebrata</taxon>
        <taxon>Euteleostomi</taxon>
        <taxon>Actinopterygii</taxon>
        <taxon>Neopterygii</taxon>
        <taxon>Teleostei</taxon>
        <taxon>Neoteleostei</taxon>
        <taxon>Acanthomorphata</taxon>
        <taxon>Eupercaria</taxon>
        <taxon>Spariformes</taxon>
        <taxon>Sparidae</taxon>
        <taxon>Sparus</taxon>
    </lineage>
</organism>